<proteinExistence type="inferred from homology"/>
<comment type="function">
    <text evidence="1">Rho GTPase-activating protein involved in the signal transduction pathway.</text>
</comment>
<comment type="subcellular location">
    <subcellularLocation>
        <location evidence="1">Cytoplasm</location>
    </subcellularLocation>
</comment>
<keyword id="KW-0175">Coiled coil</keyword>
<keyword id="KW-0963">Cytoplasm</keyword>
<keyword id="KW-0343">GTPase activation</keyword>
<keyword id="KW-1185">Reference proteome</keyword>
<evidence type="ECO:0000250" key="1"/>
<evidence type="ECO:0000255" key="2"/>
<evidence type="ECO:0000255" key="3">
    <source>
        <dbReference type="PROSITE-ProRule" id="PRU00172"/>
    </source>
</evidence>
<evidence type="ECO:0000256" key="4">
    <source>
        <dbReference type="SAM" id="MobiDB-lite"/>
    </source>
</evidence>
<accession>Q8SSN9</accession>
<accession>Q555L0</accession>
<organism>
    <name type="scientific">Dictyostelium discoideum</name>
    <name type="common">Social amoeba</name>
    <dbReference type="NCBI Taxonomy" id="44689"/>
    <lineage>
        <taxon>Eukaryota</taxon>
        <taxon>Amoebozoa</taxon>
        <taxon>Evosea</taxon>
        <taxon>Eumycetozoa</taxon>
        <taxon>Dictyostelia</taxon>
        <taxon>Dictyosteliales</taxon>
        <taxon>Dictyosteliaceae</taxon>
        <taxon>Dictyostelium</taxon>
    </lineage>
</organism>
<dbReference type="EMBL" id="AAFI02000012">
    <property type="protein sequence ID" value="EAL70014.1"/>
    <property type="molecule type" value="Genomic_DNA"/>
</dbReference>
<dbReference type="RefSeq" id="XP_644056.1">
    <property type="nucleotide sequence ID" value="XM_638964.1"/>
</dbReference>
<dbReference type="SMR" id="Q8SSN9"/>
<dbReference type="FunCoup" id="Q8SSN9">
    <property type="interactions" value="798"/>
</dbReference>
<dbReference type="STRING" id="44689.Q8SSN9"/>
<dbReference type="GlyGen" id="Q8SSN9">
    <property type="glycosylation" value="7 sites"/>
</dbReference>
<dbReference type="PaxDb" id="44689-DDB0233846"/>
<dbReference type="EnsemblProtists" id="EAL70014">
    <property type="protein sequence ID" value="EAL70014"/>
    <property type="gene ID" value="DDB_G0274243"/>
</dbReference>
<dbReference type="GeneID" id="8619485"/>
<dbReference type="KEGG" id="ddi:DDB_G0274243"/>
<dbReference type="dictyBase" id="DDB_G0274243">
    <property type="gene designation" value="gacF"/>
</dbReference>
<dbReference type="VEuPathDB" id="AmoebaDB:DDB_G0274243"/>
<dbReference type="eggNOG" id="KOG3565">
    <property type="taxonomic scope" value="Eukaryota"/>
</dbReference>
<dbReference type="HOGENOM" id="CLU_277914_0_0_1"/>
<dbReference type="InParanoid" id="Q8SSN9"/>
<dbReference type="OMA" id="PHCIGGL"/>
<dbReference type="PRO" id="PR:Q8SSN9"/>
<dbReference type="Proteomes" id="UP000002195">
    <property type="component" value="Chromosome 2"/>
</dbReference>
<dbReference type="GO" id="GO:0005737">
    <property type="term" value="C:cytoplasm"/>
    <property type="evidence" value="ECO:0000318"/>
    <property type="project" value="GO_Central"/>
</dbReference>
<dbReference type="GO" id="GO:0005096">
    <property type="term" value="F:GTPase activator activity"/>
    <property type="evidence" value="ECO:0000318"/>
    <property type="project" value="GO_Central"/>
</dbReference>
<dbReference type="GO" id="GO:0007264">
    <property type="term" value="P:small GTPase-mediated signal transduction"/>
    <property type="evidence" value="ECO:0000318"/>
    <property type="project" value="GO_Central"/>
</dbReference>
<dbReference type="CDD" id="cd00159">
    <property type="entry name" value="RhoGAP"/>
    <property type="match status" value="1"/>
</dbReference>
<dbReference type="Gene3D" id="1.10.555.10">
    <property type="entry name" value="Rho GTPase activation protein"/>
    <property type="match status" value="1"/>
</dbReference>
<dbReference type="InterPro" id="IPR008936">
    <property type="entry name" value="Rho_GTPase_activation_prot"/>
</dbReference>
<dbReference type="InterPro" id="IPR000198">
    <property type="entry name" value="RhoGAP_dom"/>
</dbReference>
<dbReference type="PANTHER" id="PTHR45808">
    <property type="entry name" value="RHO GTPASE-ACTIVATING PROTEIN 68F"/>
    <property type="match status" value="1"/>
</dbReference>
<dbReference type="PANTHER" id="PTHR45808:SF2">
    <property type="entry name" value="RHO GTPASE-ACTIVATING PROTEIN 68F"/>
    <property type="match status" value="1"/>
</dbReference>
<dbReference type="Pfam" id="PF00620">
    <property type="entry name" value="RhoGAP"/>
    <property type="match status" value="1"/>
</dbReference>
<dbReference type="SMART" id="SM00324">
    <property type="entry name" value="RhoGAP"/>
    <property type="match status" value="1"/>
</dbReference>
<dbReference type="SUPFAM" id="SSF48350">
    <property type="entry name" value="GTPase activation domain, GAP"/>
    <property type="match status" value="1"/>
</dbReference>
<dbReference type="PROSITE" id="PS50238">
    <property type="entry name" value="RHOGAP"/>
    <property type="match status" value="1"/>
</dbReference>
<protein>
    <recommendedName>
        <fullName>Rho GTPase-activating protein gacF</fullName>
    </recommendedName>
    <alternativeName>
        <fullName>GTPase activating factor for raC protein F</fullName>
    </alternativeName>
</protein>
<sequence length="1140" mass="124451">MKTHKKKKSLGGLFSHSSSSPNLKSFLTEEVIHEQQQQQQQHNNNNNNNNNHQRQPSTTSTSSYIDSASSSIEETSGYLSKTSSSSSLPSSPLHNQNQNQNGNIQLNSSSGSLNNNEQQQQQQSISQTSSPNTSSPIMGKKKPSRLAQAFKRVKNNGNNKLKKEIEELTNKTGLNQQYTHSNLPFNVVESDIDNGSSGGTTSSTGNIISHSKSPSSSSSSSSSKKHQRKSRFIEPISQSTEDYTDIPRIIKMSVEYLFEKCLLVPGIFRESANAMELQRLSQLFEKGGDIDLSEYTDPHCIGGLLKLYFREKPIPIFPYDLHKRIYSVLNEEDSNIKVKSLLESGLGKGQFLILRYLFELLNAVSINCNVNFMNYQNLAICFAPSLIQSFDLSCYDVIERLIENYHSIFGVVVPVVDNSSNVSSSSLAHPIIGGKSETNVSLNNLTVTILDHGDINNNSNSSNNNNSSSSSSPYKKSPKPSPKSSPKLNNRNSISPKLSSSTSFRKSINLSSNSIMISDEVQQEQQNQQQQQDEQQDEQQDEQQDEQQDEQNSNSTSINTSSSSITRPRKGSTVQYLNRINTCRRPSSWTNNNRIKQQQHHHHHHQQQQQHQQHQQQQSSSSESNSSLTSSPQKRLNSVNGLESYEEGKNVNEIYSSLKEESSKLPKKSSLNRQMTIVNSNNIGNGDEKNSDCTTSDEDEELKISKPIIRSTSVNEILKETNDDNNNNDQINNSNSSNNIPKTTITTTTNNTTTTNNISPIVKSKSQIITSSAKVTPTPTPAPMQTSSFLSTKQTNSPSSSSSPSSTVSSTSSSPSSSLSSSIDNKTMSNVNYNRFQPANRTVSSPNVRNFSVPTTTTTTSIGSNSFVSPRFIGKRTTPSIFSPRKQSICKPKNTTSSLSSSSSNISKSTNSTPTPTPAPILTSTLSVNSTSSSSKLQEKALPTKTTFITQTSSPLLLPQPLTSTSTSTSTSTSTSTSTSTSTSTTIPTPTPTTSSFKSNSFSTSNDNSNNNNNNNNNNNNNNNNNNNNNNNNNNVTSPTIVSSPSSPTSPISPTSSTFIKGHSHSNSLSQTPSSSSSSLGNRLTAPGRQLNHTNSTSSLISKFNQIDTPSGINQGWKGGVVVQKKQDPVKKSLAIFEKE</sequence>
<feature type="chain" id="PRO_0000380199" description="Rho GTPase-activating protein gacF">
    <location>
        <begin position="1"/>
        <end position="1140"/>
    </location>
</feature>
<feature type="domain" description="Rho-GAP" evidence="3">
    <location>
        <begin position="234"/>
        <end position="409"/>
    </location>
</feature>
<feature type="region of interest" description="Disordered" evidence="4">
    <location>
        <begin position="1"/>
        <end position="145"/>
    </location>
</feature>
<feature type="region of interest" description="Disordered" evidence="4">
    <location>
        <begin position="189"/>
        <end position="236"/>
    </location>
</feature>
<feature type="region of interest" description="Disordered" evidence="4">
    <location>
        <begin position="455"/>
        <end position="504"/>
    </location>
</feature>
<feature type="region of interest" description="Disordered" evidence="4">
    <location>
        <begin position="520"/>
        <end position="644"/>
    </location>
</feature>
<feature type="region of interest" description="Disordered" evidence="4">
    <location>
        <begin position="661"/>
        <end position="700"/>
    </location>
</feature>
<feature type="region of interest" description="Disordered" evidence="4">
    <location>
        <begin position="720"/>
        <end position="759"/>
    </location>
</feature>
<feature type="region of interest" description="Disordered" evidence="4">
    <location>
        <begin position="773"/>
        <end position="927"/>
    </location>
</feature>
<feature type="region of interest" description="Disordered" evidence="4">
    <location>
        <begin position="952"/>
        <end position="1095"/>
    </location>
</feature>
<feature type="coiled-coil region" evidence="2">
    <location>
        <begin position="28"/>
        <end position="55"/>
    </location>
</feature>
<feature type="coiled-coil region" evidence="2">
    <location>
        <begin position="517"/>
        <end position="548"/>
    </location>
</feature>
<feature type="compositionally biased region" description="Low complexity" evidence="4">
    <location>
        <begin position="10"/>
        <end position="26"/>
    </location>
</feature>
<feature type="compositionally biased region" description="Low complexity" evidence="4">
    <location>
        <begin position="35"/>
        <end position="71"/>
    </location>
</feature>
<feature type="compositionally biased region" description="Polar residues" evidence="4">
    <location>
        <begin position="72"/>
        <end position="82"/>
    </location>
</feature>
<feature type="compositionally biased region" description="Low complexity" evidence="4">
    <location>
        <begin position="83"/>
        <end position="136"/>
    </location>
</feature>
<feature type="compositionally biased region" description="Low complexity" evidence="4">
    <location>
        <begin position="193"/>
        <end position="222"/>
    </location>
</feature>
<feature type="compositionally biased region" description="Low complexity" evidence="4">
    <location>
        <begin position="456"/>
        <end position="475"/>
    </location>
</feature>
<feature type="compositionally biased region" description="Low complexity" evidence="4">
    <location>
        <begin position="482"/>
        <end position="493"/>
    </location>
</feature>
<feature type="compositionally biased region" description="Polar residues" evidence="4">
    <location>
        <begin position="494"/>
        <end position="504"/>
    </location>
</feature>
<feature type="compositionally biased region" description="Low complexity" evidence="4">
    <location>
        <begin position="520"/>
        <end position="533"/>
    </location>
</feature>
<feature type="compositionally biased region" description="Acidic residues" evidence="4">
    <location>
        <begin position="534"/>
        <end position="549"/>
    </location>
</feature>
<feature type="compositionally biased region" description="Low complexity" evidence="4">
    <location>
        <begin position="550"/>
        <end position="566"/>
    </location>
</feature>
<feature type="compositionally biased region" description="Polar residues" evidence="4">
    <location>
        <begin position="572"/>
        <end position="596"/>
    </location>
</feature>
<feature type="compositionally biased region" description="Basic residues" evidence="4">
    <location>
        <begin position="597"/>
        <end position="606"/>
    </location>
</feature>
<feature type="compositionally biased region" description="Low complexity" evidence="4">
    <location>
        <begin position="607"/>
        <end position="631"/>
    </location>
</feature>
<feature type="compositionally biased region" description="Polar residues" evidence="4">
    <location>
        <begin position="632"/>
        <end position="641"/>
    </location>
</feature>
<feature type="compositionally biased region" description="Polar residues" evidence="4">
    <location>
        <begin position="672"/>
        <end position="684"/>
    </location>
</feature>
<feature type="compositionally biased region" description="Low complexity" evidence="4">
    <location>
        <begin position="724"/>
        <end position="759"/>
    </location>
</feature>
<feature type="compositionally biased region" description="Polar residues" evidence="4">
    <location>
        <begin position="773"/>
        <end position="796"/>
    </location>
</feature>
<feature type="compositionally biased region" description="Low complexity" evidence="4">
    <location>
        <begin position="797"/>
        <end position="822"/>
    </location>
</feature>
<feature type="compositionally biased region" description="Polar residues" evidence="4">
    <location>
        <begin position="823"/>
        <end position="854"/>
    </location>
</feature>
<feature type="compositionally biased region" description="Low complexity" evidence="4">
    <location>
        <begin position="891"/>
        <end position="914"/>
    </location>
</feature>
<feature type="compositionally biased region" description="Low complexity" evidence="4">
    <location>
        <begin position="952"/>
        <end position="1058"/>
    </location>
</feature>
<feature type="compositionally biased region" description="Low complexity" evidence="4">
    <location>
        <begin position="1065"/>
        <end position="1079"/>
    </location>
</feature>
<feature type="site" description="Arginine finger; crucial for GTP hydrolysis by stabilizing the transition state" evidence="3">
    <location>
        <position position="269"/>
    </location>
</feature>
<name>GACF_DICDI</name>
<gene>
    <name type="primary">gacF</name>
    <name type="ORF">DDB_G0274243</name>
</gene>
<reference key="1">
    <citation type="journal article" date="2002" name="Nature">
        <title>Sequence and analysis of chromosome 2 of Dictyostelium discoideum.</title>
        <authorList>
            <person name="Gloeckner G."/>
            <person name="Eichinger L."/>
            <person name="Szafranski K."/>
            <person name="Pachebat J.A."/>
            <person name="Bankier A.T."/>
            <person name="Dear P.H."/>
            <person name="Lehmann R."/>
            <person name="Baumgart C."/>
            <person name="Parra G."/>
            <person name="Abril J.F."/>
            <person name="Guigo R."/>
            <person name="Kumpf K."/>
            <person name="Tunggal B."/>
            <person name="Cox E.C."/>
            <person name="Quail M.A."/>
            <person name="Platzer M."/>
            <person name="Rosenthal A."/>
            <person name="Noegel A.A."/>
        </authorList>
    </citation>
    <scope>NUCLEOTIDE SEQUENCE [LARGE SCALE GENOMIC DNA]</scope>
    <source>
        <strain>AX4</strain>
    </source>
</reference>
<reference key="2">
    <citation type="journal article" date="2005" name="Nature">
        <title>The genome of the social amoeba Dictyostelium discoideum.</title>
        <authorList>
            <person name="Eichinger L."/>
            <person name="Pachebat J.A."/>
            <person name="Gloeckner G."/>
            <person name="Rajandream M.A."/>
            <person name="Sucgang R."/>
            <person name="Berriman M."/>
            <person name="Song J."/>
            <person name="Olsen R."/>
            <person name="Szafranski K."/>
            <person name="Xu Q."/>
            <person name="Tunggal B."/>
            <person name="Kummerfeld S."/>
            <person name="Madera M."/>
            <person name="Konfortov B.A."/>
            <person name="Rivero F."/>
            <person name="Bankier A.T."/>
            <person name="Lehmann R."/>
            <person name="Hamlin N."/>
            <person name="Davies R."/>
            <person name="Gaudet P."/>
            <person name="Fey P."/>
            <person name="Pilcher K."/>
            <person name="Chen G."/>
            <person name="Saunders D."/>
            <person name="Sodergren E.J."/>
            <person name="Davis P."/>
            <person name="Kerhornou A."/>
            <person name="Nie X."/>
            <person name="Hall N."/>
            <person name="Anjard C."/>
            <person name="Hemphill L."/>
            <person name="Bason N."/>
            <person name="Farbrother P."/>
            <person name="Desany B."/>
            <person name="Just E."/>
            <person name="Morio T."/>
            <person name="Rost R."/>
            <person name="Churcher C.M."/>
            <person name="Cooper J."/>
            <person name="Haydock S."/>
            <person name="van Driessche N."/>
            <person name="Cronin A."/>
            <person name="Goodhead I."/>
            <person name="Muzny D.M."/>
            <person name="Mourier T."/>
            <person name="Pain A."/>
            <person name="Lu M."/>
            <person name="Harper D."/>
            <person name="Lindsay R."/>
            <person name="Hauser H."/>
            <person name="James K.D."/>
            <person name="Quiles M."/>
            <person name="Madan Babu M."/>
            <person name="Saito T."/>
            <person name="Buchrieser C."/>
            <person name="Wardroper A."/>
            <person name="Felder M."/>
            <person name="Thangavelu M."/>
            <person name="Johnson D."/>
            <person name="Knights A."/>
            <person name="Loulseged H."/>
            <person name="Mungall K.L."/>
            <person name="Oliver K."/>
            <person name="Price C."/>
            <person name="Quail M.A."/>
            <person name="Urushihara H."/>
            <person name="Hernandez J."/>
            <person name="Rabbinowitsch E."/>
            <person name="Steffen D."/>
            <person name="Sanders M."/>
            <person name="Ma J."/>
            <person name="Kohara Y."/>
            <person name="Sharp S."/>
            <person name="Simmonds M.N."/>
            <person name="Spiegler S."/>
            <person name="Tivey A."/>
            <person name="Sugano S."/>
            <person name="White B."/>
            <person name="Walker D."/>
            <person name="Woodward J.R."/>
            <person name="Winckler T."/>
            <person name="Tanaka Y."/>
            <person name="Shaulsky G."/>
            <person name="Schleicher M."/>
            <person name="Weinstock G.M."/>
            <person name="Rosenthal A."/>
            <person name="Cox E.C."/>
            <person name="Chisholm R.L."/>
            <person name="Gibbs R.A."/>
            <person name="Loomis W.F."/>
            <person name="Platzer M."/>
            <person name="Kay R.R."/>
            <person name="Williams J.G."/>
            <person name="Dear P.H."/>
            <person name="Noegel A.A."/>
            <person name="Barrell B.G."/>
            <person name="Kuspa A."/>
        </authorList>
    </citation>
    <scope>NUCLEOTIDE SEQUENCE [LARGE SCALE GENOMIC DNA]</scope>
    <source>
        <strain>AX4</strain>
    </source>
</reference>